<accession>A5F8G4</accession>
<accession>C3M0C7</accession>
<proteinExistence type="inferred from homology"/>
<feature type="chain" id="PRO_1000073653" description="7-cyano-7-deazaguanine synthase">
    <location>
        <begin position="1"/>
        <end position="231"/>
    </location>
</feature>
<feature type="binding site" evidence="1">
    <location>
        <begin position="8"/>
        <end position="18"/>
    </location>
    <ligand>
        <name>ATP</name>
        <dbReference type="ChEBI" id="CHEBI:30616"/>
    </ligand>
</feature>
<feature type="binding site" evidence="1">
    <location>
        <position position="187"/>
    </location>
    <ligand>
        <name>Zn(2+)</name>
        <dbReference type="ChEBI" id="CHEBI:29105"/>
    </ligand>
</feature>
<feature type="binding site" evidence="1">
    <location>
        <position position="196"/>
    </location>
    <ligand>
        <name>Zn(2+)</name>
        <dbReference type="ChEBI" id="CHEBI:29105"/>
    </ligand>
</feature>
<feature type="binding site" evidence="1">
    <location>
        <position position="199"/>
    </location>
    <ligand>
        <name>Zn(2+)</name>
        <dbReference type="ChEBI" id="CHEBI:29105"/>
    </ligand>
</feature>
<feature type="binding site" evidence="1">
    <location>
        <position position="202"/>
    </location>
    <ligand>
        <name>Zn(2+)</name>
        <dbReference type="ChEBI" id="CHEBI:29105"/>
    </ligand>
</feature>
<keyword id="KW-0067">ATP-binding</keyword>
<keyword id="KW-0436">Ligase</keyword>
<keyword id="KW-0479">Metal-binding</keyword>
<keyword id="KW-0547">Nucleotide-binding</keyword>
<keyword id="KW-0671">Queuosine biosynthesis</keyword>
<keyword id="KW-0862">Zinc</keyword>
<comment type="function">
    <text evidence="1">Catalyzes the ATP-dependent conversion of 7-carboxy-7-deazaguanine (CDG) to 7-cyano-7-deazaguanine (preQ(0)).</text>
</comment>
<comment type="catalytic activity">
    <reaction evidence="1">
        <text>7-carboxy-7-deazaguanine + NH4(+) + ATP = 7-cyano-7-deazaguanine + ADP + phosphate + H2O + H(+)</text>
        <dbReference type="Rhea" id="RHEA:27982"/>
        <dbReference type="ChEBI" id="CHEBI:15377"/>
        <dbReference type="ChEBI" id="CHEBI:15378"/>
        <dbReference type="ChEBI" id="CHEBI:28938"/>
        <dbReference type="ChEBI" id="CHEBI:30616"/>
        <dbReference type="ChEBI" id="CHEBI:43474"/>
        <dbReference type="ChEBI" id="CHEBI:45075"/>
        <dbReference type="ChEBI" id="CHEBI:61036"/>
        <dbReference type="ChEBI" id="CHEBI:456216"/>
        <dbReference type="EC" id="6.3.4.20"/>
    </reaction>
</comment>
<comment type="cofactor">
    <cofactor evidence="1">
        <name>Zn(2+)</name>
        <dbReference type="ChEBI" id="CHEBI:29105"/>
    </cofactor>
    <text evidence="1">Binds 1 zinc ion per subunit.</text>
</comment>
<comment type="pathway">
    <text evidence="1">Purine metabolism; 7-cyano-7-deazaguanine biosynthesis.</text>
</comment>
<comment type="similarity">
    <text evidence="1">Belongs to the QueC family.</text>
</comment>
<organism>
    <name type="scientific">Vibrio cholerae serotype O1 (strain ATCC 39541 / Classical Ogawa 395 / O395)</name>
    <dbReference type="NCBI Taxonomy" id="345073"/>
    <lineage>
        <taxon>Bacteria</taxon>
        <taxon>Pseudomonadati</taxon>
        <taxon>Pseudomonadota</taxon>
        <taxon>Gammaproteobacteria</taxon>
        <taxon>Vibrionales</taxon>
        <taxon>Vibrionaceae</taxon>
        <taxon>Vibrio</taxon>
    </lineage>
</organism>
<reference key="1">
    <citation type="submission" date="2007-03" db="EMBL/GenBank/DDBJ databases">
        <authorList>
            <person name="Heidelberg J."/>
        </authorList>
    </citation>
    <scope>NUCLEOTIDE SEQUENCE [LARGE SCALE GENOMIC DNA]</scope>
    <source>
        <strain>ATCC 39541 / Classical Ogawa 395 / O395</strain>
    </source>
</reference>
<reference key="2">
    <citation type="journal article" date="2008" name="PLoS ONE">
        <title>A recalibrated molecular clock and independent origins for the cholera pandemic clones.</title>
        <authorList>
            <person name="Feng L."/>
            <person name="Reeves P.R."/>
            <person name="Lan R."/>
            <person name="Ren Y."/>
            <person name="Gao C."/>
            <person name="Zhou Z."/>
            <person name="Ren Y."/>
            <person name="Cheng J."/>
            <person name="Wang W."/>
            <person name="Wang J."/>
            <person name="Qian W."/>
            <person name="Li D."/>
            <person name="Wang L."/>
        </authorList>
    </citation>
    <scope>NUCLEOTIDE SEQUENCE [LARGE SCALE GENOMIC DNA]</scope>
    <source>
        <strain>ATCC 39541 / Classical Ogawa 395 / O395</strain>
    </source>
</reference>
<evidence type="ECO:0000255" key="1">
    <source>
        <dbReference type="HAMAP-Rule" id="MF_01633"/>
    </source>
</evidence>
<gene>
    <name evidence="1" type="primary">queC</name>
    <name type="synonym">exsB</name>
    <name type="ordered locus">VC0395_A0980</name>
    <name type="ordered locus">VC395_1485</name>
</gene>
<name>QUEC_VIBC3</name>
<sequence length="231" mass="25159">MKKAVVVFSGGQDSTTCLVQALKEFDEVHAITFDYGQRHKLEIEVAQQLAKQLGVTAHKVMDVSLLNELAISSLTRDDIPVSHELQANGLPNSFVPGRNILFLTLAGIYAYQIGATTVITGVCETDFSGYPDCRDEFVQAMNQALAKGMDLPLMIRTPLMWLNKAETWALADQLGALDLVRHQTLTCYNGLIGDGCGECPACGLRQAGLKAYLDNRDLIMSALKSKQSAAH</sequence>
<dbReference type="EC" id="6.3.4.20" evidence="1"/>
<dbReference type="EMBL" id="CP000627">
    <property type="protein sequence ID" value="ABQ19630.1"/>
    <property type="molecule type" value="Genomic_DNA"/>
</dbReference>
<dbReference type="EMBL" id="CP001235">
    <property type="protein sequence ID" value="ACP09493.1"/>
    <property type="molecule type" value="Genomic_DNA"/>
</dbReference>
<dbReference type="RefSeq" id="WP_000710446.1">
    <property type="nucleotide sequence ID" value="NZ_JAACZH010000002.1"/>
</dbReference>
<dbReference type="SMR" id="A5F8G4"/>
<dbReference type="KEGG" id="vco:VC0395_A0980"/>
<dbReference type="KEGG" id="vcr:VC395_1485"/>
<dbReference type="PATRIC" id="fig|345073.21.peg.1438"/>
<dbReference type="eggNOG" id="COG0603">
    <property type="taxonomic scope" value="Bacteria"/>
</dbReference>
<dbReference type="HOGENOM" id="CLU_081854_0_0_6"/>
<dbReference type="OrthoDB" id="9789567at2"/>
<dbReference type="UniPathway" id="UPA00391"/>
<dbReference type="Proteomes" id="UP000000249">
    <property type="component" value="Chromosome 2"/>
</dbReference>
<dbReference type="GO" id="GO:0005524">
    <property type="term" value="F:ATP binding"/>
    <property type="evidence" value="ECO:0007669"/>
    <property type="project" value="UniProtKB-UniRule"/>
</dbReference>
<dbReference type="GO" id="GO:0016879">
    <property type="term" value="F:ligase activity, forming carbon-nitrogen bonds"/>
    <property type="evidence" value="ECO:0007669"/>
    <property type="project" value="UniProtKB-UniRule"/>
</dbReference>
<dbReference type="GO" id="GO:0008270">
    <property type="term" value="F:zinc ion binding"/>
    <property type="evidence" value="ECO:0007669"/>
    <property type="project" value="UniProtKB-UniRule"/>
</dbReference>
<dbReference type="GO" id="GO:0008616">
    <property type="term" value="P:queuosine biosynthetic process"/>
    <property type="evidence" value="ECO:0007669"/>
    <property type="project" value="UniProtKB-UniRule"/>
</dbReference>
<dbReference type="CDD" id="cd01995">
    <property type="entry name" value="QueC-like"/>
    <property type="match status" value="1"/>
</dbReference>
<dbReference type="FunFam" id="3.40.50.620:FF:000017">
    <property type="entry name" value="7-cyano-7-deazaguanine synthase"/>
    <property type="match status" value="1"/>
</dbReference>
<dbReference type="Gene3D" id="3.40.50.620">
    <property type="entry name" value="HUPs"/>
    <property type="match status" value="1"/>
</dbReference>
<dbReference type="HAMAP" id="MF_01633">
    <property type="entry name" value="QueC"/>
    <property type="match status" value="1"/>
</dbReference>
<dbReference type="InterPro" id="IPR018317">
    <property type="entry name" value="QueC"/>
</dbReference>
<dbReference type="InterPro" id="IPR014729">
    <property type="entry name" value="Rossmann-like_a/b/a_fold"/>
</dbReference>
<dbReference type="NCBIfam" id="TIGR00364">
    <property type="entry name" value="7-cyano-7-deazaguanine synthase QueC"/>
    <property type="match status" value="1"/>
</dbReference>
<dbReference type="NCBIfam" id="NF008317">
    <property type="entry name" value="PRK11106.1"/>
    <property type="match status" value="1"/>
</dbReference>
<dbReference type="PANTHER" id="PTHR42914">
    <property type="entry name" value="7-CYANO-7-DEAZAGUANINE SYNTHASE"/>
    <property type="match status" value="1"/>
</dbReference>
<dbReference type="PANTHER" id="PTHR42914:SF1">
    <property type="entry name" value="7-CYANO-7-DEAZAGUANINE SYNTHASE"/>
    <property type="match status" value="1"/>
</dbReference>
<dbReference type="Pfam" id="PF06508">
    <property type="entry name" value="QueC"/>
    <property type="match status" value="1"/>
</dbReference>
<dbReference type="PIRSF" id="PIRSF006293">
    <property type="entry name" value="ExsB"/>
    <property type="match status" value="1"/>
</dbReference>
<dbReference type="SUPFAM" id="SSF52402">
    <property type="entry name" value="Adenine nucleotide alpha hydrolases-like"/>
    <property type="match status" value="1"/>
</dbReference>
<protein>
    <recommendedName>
        <fullName evidence="1">7-cyano-7-deazaguanine synthase</fullName>
        <ecNumber evidence="1">6.3.4.20</ecNumber>
    </recommendedName>
    <alternativeName>
        <fullName evidence="1">7-cyano-7-carbaguanine synthase</fullName>
    </alternativeName>
    <alternativeName>
        <fullName evidence="1">PreQ(0) synthase</fullName>
    </alternativeName>
    <alternativeName>
        <fullName evidence="1">Queuosine biosynthesis protein QueC</fullName>
    </alternativeName>
</protein>